<evidence type="ECO:0000250" key="1"/>
<evidence type="ECO:0000305" key="2"/>
<sequence>MGKGKPRGLNSARKLRVHRRNNRWAENNYKKRLLGTAFKSSPFGGSSHAKGIVLEKLGIESKQPNSAIRKCVRVQLIKNGKKVTAFVPNDGCLNFVDENDEVLLAGFGRKGKAKGDIPGVRFKVVKVSGVSLLALWKEKKEKPRS</sequence>
<feature type="chain" id="PRO_0000146480" description="Small ribosomal subunit protein uS12">
    <location>
        <begin position="1"/>
        <end position="145"/>
    </location>
</feature>
<feature type="modified residue" description="Hydroxyproline" evidence="1">
    <location>
        <position position="64"/>
    </location>
</feature>
<reference key="1">
    <citation type="journal article" date="2003" name="Nature">
        <title>Yeast genome duplication was followed by asynchronous differentiation of duplicated genes.</title>
        <authorList>
            <person name="Langkjaer R.B."/>
            <person name="Cliften P.F."/>
            <person name="Johnston M."/>
            <person name="Piskur J."/>
        </authorList>
    </citation>
    <scope>NUCLEOTIDE SEQUENCE [GENOMIC DNA]</scope>
    <source>
        <strain>623-6C / CBS 9787 / CLIB 533</strain>
    </source>
</reference>
<accession>Q6YIA3</accession>
<comment type="similarity">
    <text evidence="2">Belongs to the universal ribosomal protein uS12 family.</text>
</comment>
<name>RS23_SACU7</name>
<proteinExistence type="inferred from homology"/>
<gene>
    <name type="primary">RPS23A</name>
</gene>
<gene>
    <name type="primary">RPS23B</name>
</gene>
<dbReference type="EMBL" id="AY144856">
    <property type="protein sequence ID" value="AAO32420.1"/>
    <property type="molecule type" value="Genomic_DNA"/>
</dbReference>
<dbReference type="EMBL" id="AY144857">
    <property type="protein sequence ID" value="AAO32421.1"/>
    <property type="molecule type" value="Genomic_DNA"/>
</dbReference>
<dbReference type="SMR" id="Q6YIA3"/>
<dbReference type="GO" id="GO:0015935">
    <property type="term" value="C:small ribosomal subunit"/>
    <property type="evidence" value="ECO:0007669"/>
    <property type="project" value="InterPro"/>
</dbReference>
<dbReference type="GO" id="GO:0003735">
    <property type="term" value="F:structural constituent of ribosome"/>
    <property type="evidence" value="ECO:0007669"/>
    <property type="project" value="InterPro"/>
</dbReference>
<dbReference type="GO" id="GO:0006412">
    <property type="term" value="P:translation"/>
    <property type="evidence" value="ECO:0007669"/>
    <property type="project" value="InterPro"/>
</dbReference>
<dbReference type="CDD" id="cd03367">
    <property type="entry name" value="Ribosomal_S23"/>
    <property type="match status" value="1"/>
</dbReference>
<dbReference type="FunFam" id="2.40.50.140:FF:000007">
    <property type="entry name" value="40S ribosomal protein S23"/>
    <property type="match status" value="1"/>
</dbReference>
<dbReference type="Gene3D" id="2.40.50.140">
    <property type="entry name" value="Nucleic acid-binding proteins"/>
    <property type="match status" value="1"/>
</dbReference>
<dbReference type="InterPro" id="IPR012340">
    <property type="entry name" value="NA-bd_OB-fold"/>
</dbReference>
<dbReference type="InterPro" id="IPR006032">
    <property type="entry name" value="Ribosomal_uS12"/>
</dbReference>
<dbReference type="InterPro" id="IPR005680">
    <property type="entry name" value="Ribosomal_uS12_euk/arc"/>
</dbReference>
<dbReference type="NCBIfam" id="NF003254">
    <property type="entry name" value="PRK04211.1"/>
    <property type="match status" value="1"/>
</dbReference>
<dbReference type="NCBIfam" id="TIGR00982">
    <property type="entry name" value="uS12_E_A"/>
    <property type="match status" value="1"/>
</dbReference>
<dbReference type="PANTHER" id="PTHR11652">
    <property type="entry name" value="30S RIBOSOMAL PROTEIN S12 FAMILY MEMBER"/>
    <property type="match status" value="1"/>
</dbReference>
<dbReference type="Pfam" id="PF00164">
    <property type="entry name" value="Ribosom_S12_S23"/>
    <property type="match status" value="1"/>
</dbReference>
<dbReference type="PIRSF" id="PIRSF002133">
    <property type="entry name" value="Ribosomal_S12/S23"/>
    <property type="match status" value="1"/>
</dbReference>
<dbReference type="SUPFAM" id="SSF50249">
    <property type="entry name" value="Nucleic acid-binding proteins"/>
    <property type="match status" value="1"/>
</dbReference>
<dbReference type="PROSITE" id="PS00055">
    <property type="entry name" value="RIBOSOMAL_S12"/>
    <property type="match status" value="1"/>
</dbReference>
<protein>
    <recommendedName>
        <fullName evidence="2">Small ribosomal subunit protein uS12</fullName>
    </recommendedName>
    <alternativeName>
        <fullName>40S ribosomal protein S23</fullName>
    </alternativeName>
</protein>
<keyword id="KW-0379">Hydroxylation</keyword>
<keyword id="KW-0687">Ribonucleoprotein</keyword>
<keyword id="KW-0689">Ribosomal protein</keyword>
<organism>
    <name type="scientific">Saccharomyces uvarum (strain ATCC 76518 / CBS 7001 / CLIB 283 / NBRC 10550 / MCYC 623 / NCYC 2669 / NRRL Y-11845)</name>
    <name type="common">Yeast</name>
    <name type="synonym">Saccharomyces bayanus var. uvarum</name>
    <dbReference type="NCBI Taxonomy" id="659244"/>
    <lineage>
        <taxon>Eukaryota</taxon>
        <taxon>Fungi</taxon>
        <taxon>Dikarya</taxon>
        <taxon>Ascomycota</taxon>
        <taxon>Saccharomycotina</taxon>
        <taxon>Saccharomycetes</taxon>
        <taxon>Saccharomycetales</taxon>
        <taxon>Saccharomycetaceae</taxon>
        <taxon>Saccharomyces</taxon>
    </lineage>
</organism>